<protein>
    <recommendedName>
        <fullName evidence="1">Small ribosomal subunit protein uS19</fullName>
    </recommendedName>
    <alternativeName>
        <fullName evidence="2">30S ribosomal protein S19</fullName>
    </alternativeName>
</protein>
<organism>
    <name type="scientific">Wolbachia pipientis wMel</name>
    <dbReference type="NCBI Taxonomy" id="163164"/>
    <lineage>
        <taxon>Bacteria</taxon>
        <taxon>Pseudomonadati</taxon>
        <taxon>Pseudomonadota</taxon>
        <taxon>Alphaproteobacteria</taxon>
        <taxon>Rickettsiales</taxon>
        <taxon>Anaplasmataceae</taxon>
        <taxon>Wolbachieae</taxon>
        <taxon>Wolbachia</taxon>
    </lineage>
</organism>
<sequence>MSRSAWKPPFCHPSILKSVNNALNKGFVNMAIKVHSRASVILPNCLGLKFAVYNGKDYIPVNVNDQNMIGHKFGEFSPTRKFTGHSGDKKATRR</sequence>
<comment type="function">
    <text evidence="1">Protein S19 forms a complex with S13 that binds strongly to the 16S ribosomal RNA.</text>
</comment>
<comment type="similarity">
    <text evidence="1">Belongs to the universal ribosomal protein uS19 family.</text>
</comment>
<accession>Q73H90</accession>
<proteinExistence type="inferred from homology"/>
<dbReference type="EMBL" id="AE017196">
    <property type="protein sequence ID" value="AAS14375.1"/>
    <property type="molecule type" value="Genomic_DNA"/>
</dbReference>
<dbReference type="RefSeq" id="WP_006279181.1">
    <property type="nucleotide sequence ID" value="NZ_OX384529.1"/>
</dbReference>
<dbReference type="SMR" id="Q73H90"/>
<dbReference type="EnsemblBacteria" id="AAS14375">
    <property type="protein sequence ID" value="AAS14375"/>
    <property type="gene ID" value="WD_0677"/>
</dbReference>
<dbReference type="GeneID" id="70036160"/>
<dbReference type="KEGG" id="wol:WD_0677"/>
<dbReference type="eggNOG" id="COG0185">
    <property type="taxonomic scope" value="Bacteria"/>
</dbReference>
<dbReference type="Proteomes" id="UP000008215">
    <property type="component" value="Chromosome"/>
</dbReference>
<dbReference type="GO" id="GO:0005737">
    <property type="term" value="C:cytoplasm"/>
    <property type="evidence" value="ECO:0007669"/>
    <property type="project" value="UniProtKB-ARBA"/>
</dbReference>
<dbReference type="GO" id="GO:0015935">
    <property type="term" value="C:small ribosomal subunit"/>
    <property type="evidence" value="ECO:0007669"/>
    <property type="project" value="InterPro"/>
</dbReference>
<dbReference type="GO" id="GO:0019843">
    <property type="term" value="F:rRNA binding"/>
    <property type="evidence" value="ECO:0007669"/>
    <property type="project" value="UniProtKB-UniRule"/>
</dbReference>
<dbReference type="GO" id="GO:0003735">
    <property type="term" value="F:structural constituent of ribosome"/>
    <property type="evidence" value="ECO:0007669"/>
    <property type="project" value="InterPro"/>
</dbReference>
<dbReference type="GO" id="GO:0000028">
    <property type="term" value="P:ribosomal small subunit assembly"/>
    <property type="evidence" value="ECO:0007669"/>
    <property type="project" value="TreeGrafter"/>
</dbReference>
<dbReference type="GO" id="GO:0006412">
    <property type="term" value="P:translation"/>
    <property type="evidence" value="ECO:0007669"/>
    <property type="project" value="UniProtKB-UniRule"/>
</dbReference>
<dbReference type="FunFam" id="3.30.860.10:FF:000001">
    <property type="entry name" value="30S ribosomal protein S19"/>
    <property type="match status" value="1"/>
</dbReference>
<dbReference type="Gene3D" id="3.30.860.10">
    <property type="entry name" value="30s Ribosomal Protein S19, Chain A"/>
    <property type="match status" value="1"/>
</dbReference>
<dbReference type="HAMAP" id="MF_00531">
    <property type="entry name" value="Ribosomal_uS19"/>
    <property type="match status" value="1"/>
</dbReference>
<dbReference type="InterPro" id="IPR002222">
    <property type="entry name" value="Ribosomal_uS19"/>
</dbReference>
<dbReference type="InterPro" id="IPR005732">
    <property type="entry name" value="Ribosomal_uS19_bac-type"/>
</dbReference>
<dbReference type="InterPro" id="IPR023575">
    <property type="entry name" value="Ribosomal_uS19_SF"/>
</dbReference>
<dbReference type="NCBIfam" id="TIGR01050">
    <property type="entry name" value="rpsS_bact"/>
    <property type="match status" value="1"/>
</dbReference>
<dbReference type="PANTHER" id="PTHR11880">
    <property type="entry name" value="RIBOSOMAL PROTEIN S19P FAMILY MEMBER"/>
    <property type="match status" value="1"/>
</dbReference>
<dbReference type="PANTHER" id="PTHR11880:SF8">
    <property type="entry name" value="SMALL RIBOSOMAL SUBUNIT PROTEIN US19M"/>
    <property type="match status" value="1"/>
</dbReference>
<dbReference type="Pfam" id="PF00203">
    <property type="entry name" value="Ribosomal_S19"/>
    <property type="match status" value="1"/>
</dbReference>
<dbReference type="PIRSF" id="PIRSF002144">
    <property type="entry name" value="Ribosomal_S19"/>
    <property type="match status" value="1"/>
</dbReference>
<dbReference type="PRINTS" id="PR00975">
    <property type="entry name" value="RIBOSOMALS19"/>
</dbReference>
<dbReference type="SUPFAM" id="SSF54570">
    <property type="entry name" value="Ribosomal protein S19"/>
    <property type="match status" value="1"/>
</dbReference>
<gene>
    <name evidence="1" type="primary">rpsS</name>
    <name type="ordered locus">WD_0677</name>
</gene>
<name>RS19_WOLPM</name>
<feature type="chain" id="PRO_0000354305" description="Small ribosomal subunit protein uS19">
    <location>
        <begin position="1"/>
        <end position="94"/>
    </location>
</feature>
<keyword id="KW-0687">Ribonucleoprotein</keyword>
<keyword id="KW-0689">Ribosomal protein</keyword>
<keyword id="KW-0694">RNA-binding</keyword>
<keyword id="KW-0699">rRNA-binding</keyword>
<evidence type="ECO:0000255" key="1">
    <source>
        <dbReference type="HAMAP-Rule" id="MF_00531"/>
    </source>
</evidence>
<evidence type="ECO:0000305" key="2"/>
<reference key="1">
    <citation type="journal article" date="2004" name="PLoS Biol.">
        <title>Phylogenomics of the reproductive parasite Wolbachia pipientis wMel: a streamlined genome overrun by mobile genetic elements.</title>
        <authorList>
            <person name="Wu M."/>
            <person name="Sun L.V."/>
            <person name="Vamathevan J.J."/>
            <person name="Riegler M."/>
            <person name="DeBoy R.T."/>
            <person name="Brownlie J.C."/>
            <person name="McGraw E.A."/>
            <person name="Martin W."/>
            <person name="Esser C."/>
            <person name="Ahmadinejad N."/>
            <person name="Wiegand C."/>
            <person name="Madupu R."/>
            <person name="Beanan M.J."/>
            <person name="Brinkac L.M."/>
            <person name="Daugherty S.C."/>
            <person name="Durkin A.S."/>
            <person name="Kolonay J.F."/>
            <person name="Nelson W.C."/>
            <person name="Mohamoud Y."/>
            <person name="Lee P."/>
            <person name="Berry K.J."/>
            <person name="Young M.B."/>
            <person name="Utterback T.R."/>
            <person name="Weidman J.F."/>
            <person name="Nierman W.C."/>
            <person name="Paulsen I.T."/>
            <person name="Nelson K.E."/>
            <person name="Tettelin H."/>
            <person name="O'Neill S.L."/>
            <person name="Eisen J.A."/>
        </authorList>
    </citation>
    <scope>NUCLEOTIDE SEQUENCE [LARGE SCALE GENOMIC DNA]</scope>
</reference>